<name>UTP10_YEAST</name>
<keyword id="KW-0002">3D-structure</keyword>
<keyword id="KW-0007">Acetylation</keyword>
<keyword id="KW-0496">Mitochondrion</keyword>
<keyword id="KW-0539">Nucleus</keyword>
<keyword id="KW-1185">Reference proteome</keyword>
<keyword id="KW-0687">Ribonucleoprotein</keyword>
<keyword id="KW-0690">Ribosome biogenesis</keyword>
<keyword id="KW-0698">rRNA processing</keyword>
<keyword id="KW-0804">Transcription</keyword>
<dbReference type="EMBL" id="X85021">
    <property type="protein sequence ID" value="CAA59385.1"/>
    <property type="molecule type" value="Genomic_DNA"/>
</dbReference>
<dbReference type="EMBL" id="Z49384">
    <property type="protein sequence ID" value="CAA89404.1"/>
    <property type="molecule type" value="Genomic_DNA"/>
</dbReference>
<dbReference type="EMBL" id="BK006943">
    <property type="protein sequence ID" value="DAA08691.1"/>
    <property type="molecule type" value="Genomic_DNA"/>
</dbReference>
<dbReference type="PIR" id="S53378">
    <property type="entry name" value="S53378"/>
</dbReference>
<dbReference type="RefSeq" id="NP_012426.1">
    <property type="nucleotide sequence ID" value="NM_001181542.1"/>
</dbReference>
<dbReference type="PDB" id="5WLC">
    <property type="method" value="EM"/>
    <property type="resolution" value="3.80 A"/>
    <property type="chains" value="LM=1-1769"/>
</dbReference>
<dbReference type="PDB" id="5WYJ">
    <property type="method" value="EM"/>
    <property type="resolution" value="8.70 A"/>
    <property type="chains" value="AE=1-808"/>
</dbReference>
<dbReference type="PDB" id="5WYK">
    <property type="method" value="EM"/>
    <property type="resolution" value="4.50 A"/>
    <property type="chains" value="AE=1-1769"/>
</dbReference>
<dbReference type="PDB" id="6KE6">
    <property type="method" value="EM"/>
    <property type="resolution" value="3.40 A"/>
    <property type="chains" value="AE=1-1769"/>
</dbReference>
<dbReference type="PDB" id="6LQP">
    <property type="method" value="EM"/>
    <property type="resolution" value="3.20 A"/>
    <property type="chains" value="AE=1-1769"/>
</dbReference>
<dbReference type="PDB" id="6LQQ">
    <property type="method" value="EM"/>
    <property type="resolution" value="4.10 A"/>
    <property type="chains" value="AE=1-1769"/>
</dbReference>
<dbReference type="PDB" id="6LQR">
    <property type="method" value="EM"/>
    <property type="resolution" value="8.60 A"/>
    <property type="chains" value="AE=1-1769"/>
</dbReference>
<dbReference type="PDB" id="6LQS">
    <property type="method" value="EM"/>
    <property type="resolution" value="3.80 A"/>
    <property type="chains" value="AE=1-1769"/>
</dbReference>
<dbReference type="PDB" id="6LQT">
    <property type="method" value="EM"/>
    <property type="resolution" value="4.90 A"/>
    <property type="chains" value="AE=1-1769"/>
</dbReference>
<dbReference type="PDB" id="6LQU">
    <property type="method" value="EM"/>
    <property type="resolution" value="3.70 A"/>
    <property type="chains" value="AE=1-1769"/>
</dbReference>
<dbReference type="PDB" id="6LQV">
    <property type="method" value="EM"/>
    <property type="resolution" value="4.80 A"/>
    <property type="chains" value="AE=1-1769"/>
</dbReference>
<dbReference type="PDB" id="6ND4">
    <property type="method" value="EM"/>
    <property type="resolution" value="4.30 A"/>
    <property type="chains" value="M=1-1769"/>
</dbReference>
<dbReference type="PDB" id="6ZQA">
    <property type="method" value="EM"/>
    <property type="resolution" value="4.40 A"/>
    <property type="chains" value="UJ=1-1769"/>
</dbReference>
<dbReference type="PDB" id="6ZQB">
    <property type="method" value="EM"/>
    <property type="resolution" value="3.90 A"/>
    <property type="chains" value="UJ=1-1769"/>
</dbReference>
<dbReference type="PDB" id="6ZQC">
    <property type="method" value="EM"/>
    <property type="resolution" value="3.80 A"/>
    <property type="chains" value="UJ=1-1769"/>
</dbReference>
<dbReference type="PDB" id="6ZQD">
    <property type="method" value="EM"/>
    <property type="resolution" value="3.80 A"/>
    <property type="chains" value="UJ=1-1769"/>
</dbReference>
<dbReference type="PDB" id="6ZQE">
    <property type="method" value="EM"/>
    <property type="resolution" value="7.10 A"/>
    <property type="chains" value="UJ=1-1769"/>
</dbReference>
<dbReference type="PDB" id="7AJT">
    <property type="method" value="EM"/>
    <property type="resolution" value="4.60 A"/>
    <property type="chains" value="UJ=1-1769"/>
</dbReference>
<dbReference type="PDB" id="7AJU">
    <property type="method" value="EM"/>
    <property type="resolution" value="3.80 A"/>
    <property type="chains" value="UJ=1-1769"/>
</dbReference>
<dbReference type="PDB" id="7D4I">
    <property type="method" value="EM"/>
    <property type="resolution" value="4.00 A"/>
    <property type="chains" value="AE=1-1769"/>
</dbReference>
<dbReference type="PDB" id="7D5S">
    <property type="method" value="EM"/>
    <property type="resolution" value="4.60 A"/>
    <property type="chains" value="AE=1-1769"/>
</dbReference>
<dbReference type="PDB" id="7D5T">
    <property type="method" value="EM"/>
    <property type="resolution" value="6.00 A"/>
    <property type="chains" value="AE=1-1769"/>
</dbReference>
<dbReference type="PDB" id="7D63">
    <property type="method" value="EM"/>
    <property type="resolution" value="12.30 A"/>
    <property type="chains" value="AE=1-1769"/>
</dbReference>
<dbReference type="PDB" id="7SUK">
    <property type="method" value="EM"/>
    <property type="resolution" value="3.99 A"/>
    <property type="chains" value="LM=2-426"/>
</dbReference>
<dbReference type="PDBsum" id="5WLC"/>
<dbReference type="PDBsum" id="5WYJ"/>
<dbReference type="PDBsum" id="5WYK"/>
<dbReference type="PDBsum" id="6KE6"/>
<dbReference type="PDBsum" id="6LQP"/>
<dbReference type="PDBsum" id="6LQQ"/>
<dbReference type="PDBsum" id="6LQR"/>
<dbReference type="PDBsum" id="6LQS"/>
<dbReference type="PDBsum" id="6LQT"/>
<dbReference type="PDBsum" id="6LQU"/>
<dbReference type="PDBsum" id="6LQV"/>
<dbReference type="PDBsum" id="6ND4"/>
<dbReference type="PDBsum" id="6ZQA"/>
<dbReference type="PDBsum" id="6ZQB"/>
<dbReference type="PDBsum" id="6ZQC"/>
<dbReference type="PDBsum" id="6ZQD"/>
<dbReference type="PDBsum" id="6ZQE"/>
<dbReference type="PDBsum" id="7AJT"/>
<dbReference type="PDBsum" id="7AJU"/>
<dbReference type="PDBsum" id="7D4I"/>
<dbReference type="PDBsum" id="7D5S"/>
<dbReference type="PDBsum" id="7D5T"/>
<dbReference type="PDBsum" id="7D63"/>
<dbReference type="PDBsum" id="7SUK"/>
<dbReference type="EMDB" id="EMD-0441"/>
<dbReference type="EMDB" id="EMD-0949"/>
<dbReference type="EMDB" id="EMD-0950"/>
<dbReference type="EMDB" id="EMD-0951"/>
<dbReference type="EMDB" id="EMD-0952"/>
<dbReference type="EMDB" id="EMD-0953"/>
<dbReference type="EMDB" id="EMD-0954"/>
<dbReference type="EMDB" id="EMD-0955"/>
<dbReference type="EMDB" id="EMD-11357"/>
<dbReference type="EMDB" id="EMD-11358"/>
<dbReference type="EMDB" id="EMD-11359"/>
<dbReference type="EMDB" id="EMD-11360"/>
<dbReference type="EMDB" id="EMD-11361"/>
<dbReference type="EMDB" id="EMD-11807"/>
<dbReference type="EMDB" id="EMD-11808"/>
<dbReference type="EMDB" id="EMD-25441"/>
<dbReference type="EMDB" id="EMD-30574"/>
<dbReference type="EMDB" id="EMD-30584"/>
<dbReference type="EMDB" id="EMD-30585"/>
<dbReference type="EMDB" id="EMD-30588"/>
<dbReference type="EMDB" id="EMD-6695"/>
<dbReference type="EMDB" id="EMD-6696"/>
<dbReference type="EMDB" id="EMD-8859"/>
<dbReference type="EMDB" id="EMD-9964"/>
<dbReference type="SMR" id="P42945"/>
<dbReference type="BioGRID" id="33647">
    <property type="interactions" value="483"/>
</dbReference>
<dbReference type="ComplexPortal" id="CPX-1409">
    <property type="entry name" value="UTP-A complex"/>
</dbReference>
<dbReference type="DIP" id="DIP-6466N"/>
<dbReference type="FunCoup" id="P42945">
    <property type="interactions" value="1373"/>
</dbReference>
<dbReference type="IntAct" id="P42945">
    <property type="interactions" value="100"/>
</dbReference>
<dbReference type="MINT" id="P42945"/>
<dbReference type="STRING" id="4932.YJL109C"/>
<dbReference type="iPTMnet" id="P42945"/>
<dbReference type="PaxDb" id="4932-YJL109C"/>
<dbReference type="PeptideAtlas" id="P42945"/>
<dbReference type="TopDownProteomics" id="P42945"/>
<dbReference type="EnsemblFungi" id="YJL109C_mRNA">
    <property type="protein sequence ID" value="YJL109C"/>
    <property type="gene ID" value="YJL109C"/>
</dbReference>
<dbReference type="GeneID" id="853335"/>
<dbReference type="KEGG" id="sce:YJL109C"/>
<dbReference type="AGR" id="SGD:S000003645"/>
<dbReference type="SGD" id="S000003645">
    <property type="gene designation" value="UTP10"/>
</dbReference>
<dbReference type="VEuPathDB" id="FungiDB:YJL109C"/>
<dbReference type="eggNOG" id="KOG1837">
    <property type="taxonomic scope" value="Eukaryota"/>
</dbReference>
<dbReference type="GeneTree" id="ENSGT00390000015845"/>
<dbReference type="HOGENOM" id="CLU_001128_3_1_1"/>
<dbReference type="InParanoid" id="P42945"/>
<dbReference type="OMA" id="GEPFDRY"/>
<dbReference type="OrthoDB" id="31183at2759"/>
<dbReference type="BioCyc" id="YEAST:G3O-31563-MONOMER"/>
<dbReference type="Reactome" id="R-SCE-6791226">
    <property type="pathway name" value="Major pathway of rRNA processing in the nucleolus and cytosol"/>
</dbReference>
<dbReference type="BioGRID-ORCS" id="853335">
    <property type="hits" value="4 hits in 10 CRISPR screens"/>
</dbReference>
<dbReference type="CD-CODE" id="BDAE0F88">
    <property type="entry name" value="Nucleolus"/>
</dbReference>
<dbReference type="PRO" id="PR:P42945"/>
<dbReference type="Proteomes" id="UP000002311">
    <property type="component" value="Chromosome X"/>
</dbReference>
<dbReference type="RNAct" id="P42945">
    <property type="molecule type" value="protein"/>
</dbReference>
<dbReference type="GO" id="GO:0030686">
    <property type="term" value="C:90S preribosome"/>
    <property type="evidence" value="ECO:0000314"/>
    <property type="project" value="SGD"/>
</dbReference>
<dbReference type="GO" id="GO:0005739">
    <property type="term" value="C:mitochondrion"/>
    <property type="evidence" value="ECO:0007005"/>
    <property type="project" value="SGD"/>
</dbReference>
<dbReference type="GO" id="GO:0005730">
    <property type="term" value="C:nucleolus"/>
    <property type="evidence" value="ECO:0000314"/>
    <property type="project" value="SGD"/>
</dbReference>
<dbReference type="GO" id="GO:0005654">
    <property type="term" value="C:nucleoplasm"/>
    <property type="evidence" value="ECO:0000304"/>
    <property type="project" value="Reactome"/>
</dbReference>
<dbReference type="GO" id="GO:0030688">
    <property type="term" value="C:preribosome, small subunit precursor"/>
    <property type="evidence" value="ECO:0000314"/>
    <property type="project" value="GO_Central"/>
</dbReference>
<dbReference type="GO" id="GO:0033553">
    <property type="term" value="C:rDNA heterochromatin"/>
    <property type="evidence" value="ECO:0000314"/>
    <property type="project" value="SGD"/>
</dbReference>
<dbReference type="GO" id="GO:0032040">
    <property type="term" value="C:small-subunit processome"/>
    <property type="evidence" value="ECO:0000314"/>
    <property type="project" value="SGD"/>
</dbReference>
<dbReference type="GO" id="GO:0034455">
    <property type="term" value="C:t-UTP complex"/>
    <property type="evidence" value="ECO:0000314"/>
    <property type="project" value="SGD"/>
</dbReference>
<dbReference type="GO" id="GO:0030515">
    <property type="term" value="F:snoRNA binding"/>
    <property type="evidence" value="ECO:0000318"/>
    <property type="project" value="GO_Central"/>
</dbReference>
<dbReference type="GO" id="GO:0034511">
    <property type="term" value="F:U3 snoRNA binding"/>
    <property type="evidence" value="ECO:0000314"/>
    <property type="project" value="SGD"/>
</dbReference>
<dbReference type="GO" id="GO:0000480">
    <property type="term" value="P:endonucleolytic cleavage in 5'-ETS of tricistronic rRNA transcript (SSU-rRNA, 5.8S rRNA, LSU-rRNA)"/>
    <property type="evidence" value="ECO:0000315"/>
    <property type="project" value="SGD"/>
</dbReference>
<dbReference type="GO" id="GO:0000447">
    <property type="term" value="P:endonucleolytic cleavage in ITS1 to separate SSU-rRNA from 5.8S rRNA and LSU-rRNA from tricistronic rRNA transcript (SSU-rRNA, 5.8S rRNA, LSU-rRNA)"/>
    <property type="evidence" value="ECO:0000315"/>
    <property type="project" value="SGD"/>
</dbReference>
<dbReference type="GO" id="GO:0000472">
    <property type="term" value="P:endonucleolytic cleavage to generate mature 5'-end of SSU-rRNA from (SSU-rRNA, 5.8S rRNA, LSU-rRNA)"/>
    <property type="evidence" value="ECO:0000315"/>
    <property type="project" value="SGD"/>
</dbReference>
<dbReference type="GO" id="GO:0030490">
    <property type="term" value="P:maturation of SSU-rRNA"/>
    <property type="evidence" value="ECO:0000303"/>
    <property type="project" value="ComplexPortal"/>
</dbReference>
<dbReference type="GO" id="GO:0000462">
    <property type="term" value="P:maturation of SSU-rRNA from tricistronic rRNA transcript (SSU-rRNA, 5.8S rRNA, LSU-rRNA)"/>
    <property type="evidence" value="ECO:0000315"/>
    <property type="project" value="SGD"/>
</dbReference>
<dbReference type="GO" id="GO:0045943">
    <property type="term" value="P:positive regulation of transcription by RNA polymerase I"/>
    <property type="evidence" value="ECO:0000315"/>
    <property type="project" value="SGD"/>
</dbReference>
<dbReference type="FunFam" id="1.25.10.10:FF:000530">
    <property type="entry name" value="UTP10p Nucleolar protein"/>
    <property type="match status" value="1"/>
</dbReference>
<dbReference type="FunFam" id="1.25.10.10:FF:000730">
    <property type="entry name" value="UTP10p Nucleolar protein"/>
    <property type="match status" value="1"/>
</dbReference>
<dbReference type="Gene3D" id="1.25.10.10">
    <property type="entry name" value="Leucine-rich Repeat Variant"/>
    <property type="match status" value="2"/>
</dbReference>
<dbReference type="InterPro" id="IPR011989">
    <property type="entry name" value="ARM-like"/>
</dbReference>
<dbReference type="InterPro" id="IPR016024">
    <property type="entry name" value="ARM-type_fold"/>
</dbReference>
<dbReference type="InterPro" id="IPR012954">
    <property type="entry name" value="BP28_C_dom"/>
</dbReference>
<dbReference type="InterPro" id="IPR021133">
    <property type="entry name" value="HEAT_type_2"/>
</dbReference>
<dbReference type="InterPro" id="IPR056473">
    <property type="entry name" value="HEAT_Utp10/HEAT1"/>
</dbReference>
<dbReference type="InterPro" id="IPR022125">
    <property type="entry name" value="U3snoRNP10_N"/>
</dbReference>
<dbReference type="InterPro" id="IPR040191">
    <property type="entry name" value="UTP10"/>
</dbReference>
<dbReference type="PANTHER" id="PTHR13457">
    <property type="entry name" value="BAP28"/>
    <property type="match status" value="1"/>
</dbReference>
<dbReference type="PANTHER" id="PTHR13457:SF1">
    <property type="entry name" value="HEAT REPEAT-CONTAINING PROTEIN 1"/>
    <property type="match status" value="1"/>
</dbReference>
<dbReference type="Pfam" id="PF08146">
    <property type="entry name" value="BP28CT"/>
    <property type="match status" value="1"/>
</dbReference>
<dbReference type="Pfam" id="PF23243">
    <property type="entry name" value="HEAT_HEATR1"/>
    <property type="match status" value="1"/>
</dbReference>
<dbReference type="Pfam" id="PF12397">
    <property type="entry name" value="U3snoRNP10"/>
    <property type="match status" value="1"/>
</dbReference>
<dbReference type="SMART" id="SM01036">
    <property type="entry name" value="BP28CT"/>
    <property type="match status" value="1"/>
</dbReference>
<dbReference type="SUPFAM" id="SSF48371">
    <property type="entry name" value="ARM repeat"/>
    <property type="match status" value="3"/>
</dbReference>
<dbReference type="PROSITE" id="PS50077">
    <property type="entry name" value="HEAT_REPEAT"/>
    <property type="match status" value="1"/>
</dbReference>
<sequence length="1769" mass="200082">MSSLSDQLAQVASNNATVALDRKRRQKLHSASLIYNSKTAATQDYDFIFENASKALEELSQIEPKFAIFSRTLFSESSISLDRNVQTKEEIKDLDNAINAYLLLASSKWYLAPTLHATEWLVRRFQIHVKNTEMLLLSTLNYYQTPVFKRILSIIKLPPLFNCLSNFVRSEKPPTALTMIKLFNDMDFLKLYTSYLDQCIKHNATYTNQLLFTTCCFINVVAFNSNNDEKLNQLVPILLEISAKLLASKSKDCQIAAHTILVVFATALPLKKTIILAAMETILSNLDAKEAKHSALLTICKLFQTLKGQGNVDQLPSKIFKLFDSKFDTVSILTFLDKEDKPVCDKFITSYTRSIARYDRSKLNIILSLLKKIRLERYEVRLIITDLIYLSEILEDKSQLVELFEYFISINEDLVLKCLKSLGLTGELFEIRLTTSLFTNADVNTDIVKQLSDPVETTKKDTASFQTFLDKHSELINTTNVSMLTETGERYKKVLSLFTEAIGKGYKASSFLTSFFTTLESRITFLLRVTISPAAPTALKLISLNNIAKYINSIEKEVNIFTLVPCLICALRDASIKVRTGVKKILSLIAKRPSTKHYFLSDKLYGENVTIPMLNPKDSEAWLSGFLNEYVTENYDISRILTPKRNEKVFLMFWANQALLIPSPYAKTVLLDNLNKSPTYASSYSSLFEEFISHYLENRSSWEKSCIANKTNFEHFERSLVNLVSPKEKQSFMIDFVLSALNSDYEQLANIAAERLISIFASLNNAQKLKIVQNIVDSSSNVESSYDTVGVLQSLPLDSDIFVSILNQNSISNEMDQTDFSKRRRRRSSTSKNAFLKEEVSQLAELHLRKLTIILEALDKVRNVGSEKLLFTLLSLLSDLETLDQDGGLPVLYAQETLISCTLNTITYLKEHGCTELTNVRADILVSAIRNSASPQVQNKLLLVIGSLATLSSEVILHSVMPIFTFMGAHSIRQDDEFTTKVVERTILTVVPALIKNSKGNEKEEMEFLLLSFTTALQHVPRHRRVKLFSTLIKTLDPVKALGSFLFLIAQQYSSALVNFKIGEARILIEFIKALLVDLHVNEELSGLNDLLDIIKLLTSSKSSSEKKKSLESRVLFSNGVLNFSESEFLTFMNNTFEFINKITEETDQDYYDVRRNLRLKVYSVLLDETSDKKLIRNIREEFGTLLEGVLFFINSVELTFSCITSQENEEASDSETSLSDHTTEIKEILFKVLGNVLQILPVDEFVNAVLPLLSTSTNEDIRYHLTLVIGSKFELEGSEAIPIVNNVMKVLLDRMPLESKSVVISQVILNTMTALVSKYGKKLEGSILTQALTLATEKVSSDMTEVKISSLALITNCVQVLGVKSIAFYPKIVPPSIKLFDASLADSSNPLKEQLQVAILLLFAGLIKRIPSFLMSNILDVLHVIYFSREVDSSIRLSVISLIIENIDLKEVLKVLFRIWSTEIATSNDTVAVSLFLSTLESTVENIDKKSATSQSPIFFKLLLSLFEFRSISSFDNNTISRIEASVHEISNSYVLKMNDKVFRPLFVILVRWAFDGEGVTNAGITETERLLAFFKFFNKLQENLRGIITSYFTYLLEPVDMLLKRFISKDMENVNLRRLVINSLTSSLKFDRDEYWKSTSRFELISVSLVNQLSNIENSIGKYLVKAIGALASNNSGVDEHNQILNKLIVEHMKASCSSNEKLWAIRAMKLIYSKIGESWLVLLPQLVPVIAELLEDDDEEIEREVRTGLVKVVENVLGEPFDRYLD</sequence>
<organism>
    <name type="scientific">Saccharomyces cerevisiae (strain ATCC 204508 / S288c)</name>
    <name type="common">Baker's yeast</name>
    <dbReference type="NCBI Taxonomy" id="559292"/>
    <lineage>
        <taxon>Eukaryota</taxon>
        <taxon>Fungi</taxon>
        <taxon>Dikarya</taxon>
        <taxon>Ascomycota</taxon>
        <taxon>Saccharomycotina</taxon>
        <taxon>Saccharomycetes</taxon>
        <taxon>Saccharomycetales</taxon>
        <taxon>Saccharomycetaceae</taxon>
        <taxon>Saccharomyces</taxon>
    </lineage>
</organism>
<gene>
    <name type="primary">UTP10</name>
    <name type="ordered locus">YJL109C</name>
    <name type="ORF">J0808</name>
</gene>
<comment type="function">
    <text evidence="1 3 4 5">Involved in nucleolar processing of pre-18S ribosomal RNA. Required for optimal pre-ribosomal RNA transcription by RNA polymerase I together with a subset of U3 proteins required for transcription (t-UTPs). Involved in ribosome biosynthesis.</text>
</comment>
<comment type="subunit">
    <text evidence="1 3 5">Interacts with snoRNA U3. Interacts with MPP10. Component of the ribosomal small subunit (SSU) processome composed of at least 40 protein subunits and snoRNA U3. In the absence of snoRNA3, forms a complex with other t-UTPs. This complex can associate with pre-18S ribosomal RNAs.</text>
</comment>
<comment type="interaction">
    <interactant intactId="EBI-1884">
        <id>P42945</id>
    </interactant>
    <interactant intactId="EBI-11168">
        <id>P47083</id>
        <label>MPP10</label>
    </interactant>
    <organismsDiffer>false</organismsDiffer>
    <experiments>8</experiments>
</comment>
<comment type="interaction">
    <interactant intactId="EBI-1884">
        <id>P42945</id>
    </interactant>
    <interactant intactId="EBI-37773">
        <id>Q02931</id>
        <label>NAN1</label>
    </interactant>
    <organismsDiffer>false</organismsDiffer>
    <experiments>8</experiments>
</comment>
<comment type="interaction">
    <interactant intactId="EBI-1884">
        <id>P42945</id>
    </interactant>
    <interactant intactId="EBI-36459">
        <id>Q06512</id>
        <label>NOC4</label>
    </interactant>
    <organismsDiffer>false</organismsDiffer>
    <experiments>4</experiments>
</comment>
<comment type="interaction">
    <interactant intactId="EBI-1884">
        <id>P42945</id>
    </interactant>
    <interactant intactId="EBI-16011">
        <id>Q05022</id>
        <label>RRP5</label>
    </interactant>
    <organismsDiffer>false</organismsDiffer>
    <experiments>5</experiments>
</comment>
<comment type="interaction">
    <interactant intactId="EBI-1884">
        <id>P42945</id>
    </interactant>
    <interactant intactId="EBI-35712">
        <id>Q06679</id>
        <label>UTP4</label>
    </interactant>
    <organismsDiffer>false</organismsDiffer>
    <experiments>5</experiments>
</comment>
<comment type="interaction">
    <interactant intactId="EBI-1884">
        <id>P42945</id>
    </interactant>
    <interactant intactId="EBI-35844">
        <id>Q04177</id>
        <label>UTP5</label>
    </interactant>
    <organismsDiffer>false</organismsDiffer>
    <experiments>3</experiments>
</comment>
<comment type="interaction">
    <interactant intactId="EBI-1884">
        <id>P42945</id>
    </interactant>
    <interactant intactId="EBI-22597">
        <id>P40055</id>
        <label>UTP7</label>
    </interactant>
    <organismsDiffer>false</organismsDiffer>
    <experiments>7</experiments>
</comment>
<comment type="interaction">
    <interactant intactId="EBI-1884">
        <id>P42945</id>
    </interactant>
    <interactant intactId="EBI-23301">
        <id>P53276</id>
        <label>UTP8</label>
    </interactant>
    <organismsDiffer>false</organismsDiffer>
    <experiments>5</experiments>
</comment>
<comment type="subcellular location">
    <subcellularLocation>
        <location>Nucleus</location>
        <location>Nucleolus</location>
    </subcellularLocation>
    <subcellularLocation>
        <location>Mitochondrion</location>
    </subcellularLocation>
    <text>Associated with ribosomal chromatin, even in the absence of transcription.</text>
</comment>
<comment type="miscellaneous">
    <text evidence="2">Present with 18200 molecules/cell in log phase SD medium.</text>
</comment>
<comment type="similarity">
    <text evidence="6">Belongs to the HEATR1/UTP10 family.</text>
</comment>
<accession>P42945</accession>
<accession>D6VW75</accession>
<feature type="initiator methionine" description="Removed" evidence="7">
    <location>
        <position position="1"/>
    </location>
</feature>
<feature type="chain" id="PRO_0000186207" description="U3 small nucleolar RNA-associated protein 10">
    <location>
        <begin position="2"/>
        <end position="1769"/>
    </location>
</feature>
<feature type="repeat" description="HEAT">
    <location>
        <begin position="1729"/>
        <end position="1767"/>
    </location>
</feature>
<feature type="modified residue" description="N-acetylserine" evidence="7">
    <location>
        <position position="2"/>
    </location>
</feature>
<reference key="1">
    <citation type="journal article" date="1995" name="Yeast">
        <title>A 37.5 kb region of yeast chromosome X includes the SME1, MEF2, GSH1 and CSD3 genes, a TCP-1-related gene, an open reading frame similar to the DAL80 gene, and a tRNA(Arg).</title>
        <authorList>
            <person name="Rasmussen S.W."/>
        </authorList>
    </citation>
    <scope>NUCLEOTIDE SEQUENCE [GENOMIC DNA]</scope>
    <source>
        <strain>ATCC 96604 / S288c / FY1679</strain>
    </source>
</reference>
<reference key="2">
    <citation type="journal article" date="1996" name="EMBO J.">
        <title>Complete nucleotide sequence of Saccharomyces cerevisiae chromosome X.</title>
        <authorList>
            <person name="Galibert F."/>
            <person name="Alexandraki D."/>
            <person name="Baur A."/>
            <person name="Boles E."/>
            <person name="Chalwatzis N."/>
            <person name="Chuat J.-C."/>
            <person name="Coster F."/>
            <person name="Cziepluch C."/>
            <person name="de Haan M."/>
            <person name="Domdey H."/>
            <person name="Durand P."/>
            <person name="Entian K.-D."/>
            <person name="Gatius M."/>
            <person name="Goffeau A."/>
            <person name="Grivell L.A."/>
            <person name="Hennemann A."/>
            <person name="Herbert C.J."/>
            <person name="Heumann K."/>
            <person name="Hilger F."/>
            <person name="Hollenberg C.P."/>
            <person name="Huang M.-E."/>
            <person name="Jacq C."/>
            <person name="Jauniaux J.-C."/>
            <person name="Katsoulou C."/>
            <person name="Kirchrath L."/>
            <person name="Kleine K."/>
            <person name="Kordes E."/>
            <person name="Koetter P."/>
            <person name="Liebl S."/>
            <person name="Louis E.J."/>
            <person name="Manus V."/>
            <person name="Mewes H.-W."/>
            <person name="Miosga T."/>
            <person name="Obermaier B."/>
            <person name="Perea J."/>
            <person name="Pohl T.M."/>
            <person name="Portetelle D."/>
            <person name="Pujol A."/>
            <person name="Purnelle B."/>
            <person name="Ramezani Rad M."/>
            <person name="Rasmussen S.W."/>
            <person name="Rose M."/>
            <person name="Rossau R."/>
            <person name="Schaaff-Gerstenschlaeger I."/>
            <person name="Smits P.H.M."/>
            <person name="Scarcez T."/>
            <person name="Soriano N."/>
            <person name="To Van D."/>
            <person name="Tzermia M."/>
            <person name="Van Broekhoven A."/>
            <person name="Vandenbol M."/>
            <person name="Wedler H."/>
            <person name="von Wettstein D."/>
            <person name="Wambutt R."/>
            <person name="Zagulski M."/>
            <person name="Zollner A."/>
            <person name="Karpfinger-Hartl L."/>
        </authorList>
    </citation>
    <scope>NUCLEOTIDE SEQUENCE [LARGE SCALE GENOMIC DNA]</scope>
    <source>
        <strain>ATCC 204508 / S288c</strain>
    </source>
</reference>
<reference key="3">
    <citation type="journal article" date="2014" name="G3 (Bethesda)">
        <title>The reference genome sequence of Saccharomyces cerevisiae: Then and now.</title>
        <authorList>
            <person name="Engel S.R."/>
            <person name="Dietrich F.S."/>
            <person name="Fisk D.G."/>
            <person name="Binkley G."/>
            <person name="Balakrishnan R."/>
            <person name="Costanzo M.C."/>
            <person name="Dwight S.S."/>
            <person name="Hitz B.C."/>
            <person name="Karra K."/>
            <person name="Nash R.S."/>
            <person name="Weng S."/>
            <person name="Wong E.D."/>
            <person name="Lloyd P."/>
            <person name="Skrzypek M.S."/>
            <person name="Miyasato S.R."/>
            <person name="Simison M."/>
            <person name="Cherry J.M."/>
        </authorList>
    </citation>
    <scope>GENOME REANNOTATION</scope>
    <source>
        <strain>ATCC 204508 / S288c</strain>
    </source>
</reference>
<reference key="4">
    <citation type="journal article" date="2002" name="Nature">
        <title>A large nucleolar U3 ribonucleoprotein required for 18S ribosomal RNA biogenesis.</title>
        <authorList>
            <person name="Dragon F."/>
            <person name="Gallagher J.E.G."/>
            <person name="Compagnone-Post P.A."/>
            <person name="Mitchell B.M."/>
            <person name="Porwancher K.A."/>
            <person name="Wehner K.A."/>
            <person name="Wormsley S."/>
            <person name="Settlage R.E."/>
            <person name="Shabanowitz J."/>
            <person name="Osheim Y."/>
            <person name="Beyer A.L."/>
            <person name="Hunt D.F."/>
            <person name="Baserga S.J."/>
        </authorList>
    </citation>
    <scope>FUNCTION</scope>
    <scope>INTERACTION WITH MPP10 AND SNORNA U3</scope>
    <scope>IDENTIFICATION IN SSU PROCESSOME BY MASS SPECTROMETRY</scope>
    <scope>SUBCELLULAR LOCATION</scope>
</reference>
<reference key="5">
    <citation type="journal article" date="2003" name="Nature">
        <title>Global analysis of protein localization in budding yeast.</title>
        <authorList>
            <person name="Huh W.-K."/>
            <person name="Falvo J.V."/>
            <person name="Gerke L.C."/>
            <person name="Carroll A.S."/>
            <person name="Howson R.W."/>
            <person name="Weissman J.S."/>
            <person name="O'Shea E.K."/>
        </authorList>
    </citation>
    <scope>SUBCELLULAR LOCATION [LARGE SCALE ANALYSIS]</scope>
</reference>
<reference key="6">
    <citation type="journal article" date="2003" name="Nature">
        <title>Global analysis of protein expression in yeast.</title>
        <authorList>
            <person name="Ghaemmaghami S."/>
            <person name="Huh W.-K."/>
            <person name="Bower K."/>
            <person name="Howson R.W."/>
            <person name="Belle A."/>
            <person name="Dephoure N."/>
            <person name="O'Shea E.K."/>
            <person name="Weissman J.S."/>
        </authorList>
    </citation>
    <scope>LEVEL OF PROTEIN EXPRESSION [LARGE SCALE ANALYSIS]</scope>
</reference>
<reference key="7">
    <citation type="journal article" date="2003" name="Proc. Natl. Acad. Sci. U.S.A.">
        <title>The proteome of Saccharomyces cerevisiae mitochondria.</title>
        <authorList>
            <person name="Sickmann A."/>
            <person name="Reinders J."/>
            <person name="Wagner Y."/>
            <person name="Joppich C."/>
            <person name="Zahedi R.P."/>
            <person name="Meyer H.E."/>
            <person name="Schoenfisch B."/>
            <person name="Perschil I."/>
            <person name="Chacinska A."/>
            <person name="Guiard B."/>
            <person name="Rehling P."/>
            <person name="Pfanner N."/>
            <person name="Meisinger C."/>
        </authorList>
    </citation>
    <scope>SUBCELLULAR LOCATION [LARGE SCALE ANALYSIS]</scope>
    <source>
        <strain>ATCC 76625 / YPH499</strain>
    </source>
</reference>
<reference key="8">
    <citation type="journal article" date="2004" name="Genes Dev.">
        <title>RNA polymerase I transcription and pre-rRNA processing are linked by specific SSU processome components.</title>
        <authorList>
            <person name="Gallagher J.E.G."/>
            <person name="Dunbar D.A."/>
            <person name="Granneman S."/>
            <person name="Mitchell B.M."/>
            <person name="Osheim Y."/>
            <person name="Beyer A.L."/>
            <person name="Baserga S.J."/>
        </authorList>
    </citation>
    <scope>FUNCTION</scope>
    <scope>IDENTIFICATION IN COMPLEX WITH OTHER T-UTPS</scope>
    <scope>SUBCELLULAR LOCATION</scope>
</reference>
<reference key="9">
    <citation type="journal article" date="2006" name="Yeast">
        <title>The budding yeast rRNA and ribosome biosynthesis (RRB) regulon contains over 200 genes.</title>
        <authorList>
            <person name="Wade C.H."/>
            <person name="Umbarger M.A."/>
            <person name="McAlear M.A."/>
        </authorList>
    </citation>
    <scope>FUNCTION</scope>
</reference>
<reference key="10">
    <citation type="journal article" date="2007" name="RNA">
        <title>Roles of the HEAT repeat proteins Utp10 and Utp20 in 40S ribosome maturation.</title>
        <authorList>
            <person name="Dez C."/>
            <person name="Dlakic M."/>
            <person name="Tollervey D."/>
        </authorList>
    </citation>
    <scope>FUNCTION</scope>
    <scope>INTERACTION WITH SNORNA U3 AND PRE-RIBOSOMAL RNA</scope>
    <scope>SUBCELLULAR LOCATION</scope>
</reference>
<reference key="11">
    <citation type="journal article" date="2008" name="Mol. Cell. Proteomics">
        <title>A multidimensional chromatography technology for in-depth phosphoproteome analysis.</title>
        <authorList>
            <person name="Albuquerque C.P."/>
            <person name="Smolka M.B."/>
            <person name="Payne S.H."/>
            <person name="Bafna V."/>
            <person name="Eng J."/>
            <person name="Zhou H."/>
        </authorList>
    </citation>
    <scope>IDENTIFICATION BY MASS SPECTROMETRY [LARGE SCALE ANALYSIS]</scope>
</reference>
<reference key="12">
    <citation type="journal article" date="2012" name="Proc. Natl. Acad. Sci. U.S.A.">
        <title>N-terminal acetylome analyses and functional insights of the N-terminal acetyltransferase NatB.</title>
        <authorList>
            <person name="Van Damme P."/>
            <person name="Lasa M."/>
            <person name="Polevoda B."/>
            <person name="Gazquez C."/>
            <person name="Elosegui-Artola A."/>
            <person name="Kim D.S."/>
            <person name="De Juan-Pardo E."/>
            <person name="Demeyer K."/>
            <person name="Hole K."/>
            <person name="Larrea E."/>
            <person name="Timmerman E."/>
            <person name="Prieto J."/>
            <person name="Arnesen T."/>
            <person name="Sherman F."/>
            <person name="Gevaert K."/>
            <person name="Aldabe R."/>
        </authorList>
    </citation>
    <scope>ACETYLATION [LARGE SCALE ANALYSIS] AT SER-2</scope>
    <scope>CLEAVAGE OF INITIATOR METHIONINE [LARGE SCALE ANALYSIS]</scope>
    <scope>IDENTIFICATION BY MASS SPECTROMETRY [LARGE SCALE ANALYSIS]</scope>
</reference>
<protein>
    <recommendedName>
        <fullName>U3 small nucleolar RNA-associated protein 10</fullName>
        <shortName>U3 snoRNA-associated protein 10</shortName>
    </recommendedName>
    <alternativeName>
        <fullName>U three protein 10</fullName>
    </alternativeName>
    <alternativeName>
        <fullName>U3 protein 10 required for transcription</fullName>
    </alternativeName>
    <alternativeName>
        <fullName>t-UTP10</fullName>
    </alternativeName>
</protein>
<proteinExistence type="evidence at protein level"/>
<evidence type="ECO:0000269" key="1">
    <source>
    </source>
</evidence>
<evidence type="ECO:0000269" key="2">
    <source>
    </source>
</evidence>
<evidence type="ECO:0000269" key="3">
    <source>
    </source>
</evidence>
<evidence type="ECO:0000269" key="4">
    <source>
    </source>
</evidence>
<evidence type="ECO:0000269" key="5">
    <source>
    </source>
</evidence>
<evidence type="ECO:0000305" key="6"/>
<evidence type="ECO:0007744" key="7">
    <source>
    </source>
</evidence>